<feature type="chain" id="PRO_0000376677" description="2,3,4,5-tetrahydropyridine-2,6-dicarboxylate N-acetyltransferase">
    <location>
        <begin position="1"/>
        <end position="236"/>
    </location>
</feature>
<comment type="function">
    <text evidence="1">Catalyzes the transfer of an acetyl group from acetyl-CoA to tetrahydrodipicolinate.</text>
</comment>
<comment type="catalytic activity">
    <reaction evidence="1">
        <text>(S)-2,3,4,5-tetrahydrodipicolinate + acetyl-CoA + H2O = L-2-acetamido-6-oxoheptanedioate + CoA</text>
        <dbReference type="Rhea" id="RHEA:13085"/>
        <dbReference type="ChEBI" id="CHEBI:15377"/>
        <dbReference type="ChEBI" id="CHEBI:16845"/>
        <dbReference type="ChEBI" id="CHEBI:57287"/>
        <dbReference type="ChEBI" id="CHEBI:57288"/>
        <dbReference type="ChEBI" id="CHEBI:58117"/>
        <dbReference type="EC" id="2.3.1.89"/>
    </reaction>
</comment>
<comment type="pathway">
    <text evidence="1">Amino-acid biosynthesis; L-lysine biosynthesis via DAP pathway; LL-2,6-diaminopimelate from (S)-tetrahydrodipicolinate (acetylase route): step 1/3.</text>
</comment>
<comment type="similarity">
    <text evidence="1">Belongs to the transferase hexapeptide repeat family. DapH subfamily.</text>
</comment>
<name>DAPH_LISIV</name>
<sequence length="236" mass="24858">MKQMDAHQIISFIQNSKKATPVKVYLKGDLEKITFPVDVKTFITGNAGTIFGEWAIVEPLLEANKANIEDYVIENDRRNSAIPLLDMKNINARIEPGAVIRDQVTIGDNAVIMMGASINIGAVIGDGTMIDMNVVLGGRATVGKNCHIGAGSVLAGVVEPPSAQPVIVEDNVVIGANVVVLEGVRIGEGAVVAAGAIVTKDVAPGTVVAGIPARELKKLDAKTASKTEIMQELRQL</sequence>
<accession>Q6LAN4</accession>
<organism>
    <name type="scientific">Listeria ivanovii</name>
    <dbReference type="NCBI Taxonomy" id="1638"/>
    <lineage>
        <taxon>Bacteria</taxon>
        <taxon>Bacillati</taxon>
        <taxon>Bacillota</taxon>
        <taxon>Bacilli</taxon>
        <taxon>Bacillales</taxon>
        <taxon>Listeriaceae</taxon>
        <taxon>Listeria</taxon>
    </lineage>
</organism>
<evidence type="ECO:0000255" key="1">
    <source>
        <dbReference type="HAMAP-Rule" id="MF_01691"/>
    </source>
</evidence>
<proteinExistence type="inferred from homology"/>
<keyword id="KW-0012">Acyltransferase</keyword>
<keyword id="KW-0028">Amino-acid biosynthesis</keyword>
<keyword id="KW-0220">Diaminopimelate biosynthesis</keyword>
<keyword id="KW-0457">Lysine biosynthesis</keyword>
<keyword id="KW-0677">Repeat</keyword>
<keyword id="KW-0808">Transferase</keyword>
<gene>
    <name evidence="1" type="primary">dapH</name>
</gene>
<reference key="1">
    <citation type="submission" date="1996-06" db="EMBL/GenBank/DDBJ databases">
        <authorList>
            <person name="Dominguez G."/>
        </authorList>
    </citation>
    <scope>NUCLEOTIDE SEQUENCE [GENOMIC DNA]</scope>
    <source>
        <strain>ATCC 19119 / DSM 20750 / BCRC 14844 / JCM 7681 / KCTC 3444 / NCTC 11846 / NRRL B-33017 / SLCC 2379 / WDCM 00018</strain>
    </source>
</reference>
<protein>
    <recommendedName>
        <fullName evidence="1">2,3,4,5-tetrahydropyridine-2,6-dicarboxylate N-acetyltransferase</fullName>
        <ecNumber evidence="1">2.3.1.89</ecNumber>
    </recommendedName>
    <alternativeName>
        <fullName evidence="1">Tetrahydrodipicolinate N-acetyltransferase</fullName>
        <shortName evidence="1">THP acetyltransferase</shortName>
        <shortName evidence="1">Tetrahydropicolinate acetylase</shortName>
    </alternativeName>
</protein>
<dbReference type="EC" id="2.3.1.89" evidence="1"/>
<dbReference type="EMBL" id="X98994">
    <property type="protein sequence ID" value="CAC79602.1"/>
    <property type="molecule type" value="Genomic_DNA"/>
</dbReference>
<dbReference type="SMR" id="Q6LAN4"/>
<dbReference type="OMA" id="KHCHIGA"/>
<dbReference type="UniPathway" id="UPA00034">
    <property type="reaction ID" value="UER00022"/>
</dbReference>
<dbReference type="GO" id="GO:0047200">
    <property type="term" value="F:tetrahydrodipicolinate N-acetyltransferase activity"/>
    <property type="evidence" value="ECO:0007669"/>
    <property type="project" value="UniProtKB-EC"/>
</dbReference>
<dbReference type="GO" id="GO:0019877">
    <property type="term" value="P:diaminopimelate biosynthetic process"/>
    <property type="evidence" value="ECO:0007669"/>
    <property type="project" value="UniProtKB-UniRule"/>
</dbReference>
<dbReference type="GO" id="GO:0009089">
    <property type="term" value="P:lysine biosynthetic process via diaminopimelate"/>
    <property type="evidence" value="ECO:0007669"/>
    <property type="project" value="UniProtKB-UniRule"/>
</dbReference>
<dbReference type="CDD" id="cd03350">
    <property type="entry name" value="LbH_THP_succinylT"/>
    <property type="match status" value="1"/>
</dbReference>
<dbReference type="Gene3D" id="2.160.10.10">
    <property type="entry name" value="Hexapeptide repeat proteins"/>
    <property type="match status" value="1"/>
</dbReference>
<dbReference type="Gene3D" id="3.30.70.250">
    <property type="entry name" value="Malonyl-CoA ACP transacylase, ACP-binding"/>
    <property type="match status" value="1"/>
</dbReference>
<dbReference type="HAMAP" id="MF_01691">
    <property type="entry name" value="DapH"/>
    <property type="match status" value="1"/>
</dbReference>
<dbReference type="InterPro" id="IPR019873">
    <property type="entry name" value="DapH"/>
</dbReference>
<dbReference type="InterPro" id="IPR013710">
    <property type="entry name" value="DapH_N"/>
</dbReference>
<dbReference type="InterPro" id="IPR001451">
    <property type="entry name" value="Hexapep"/>
</dbReference>
<dbReference type="InterPro" id="IPR018357">
    <property type="entry name" value="Hexapep_transf_CS"/>
</dbReference>
<dbReference type="InterPro" id="IPR050179">
    <property type="entry name" value="Trans_hexapeptide_repeat"/>
</dbReference>
<dbReference type="InterPro" id="IPR011004">
    <property type="entry name" value="Trimer_LpxA-like_sf"/>
</dbReference>
<dbReference type="NCBIfam" id="TIGR03532">
    <property type="entry name" value="DapD_Ac"/>
    <property type="match status" value="1"/>
</dbReference>
<dbReference type="PANTHER" id="PTHR43300:SF10">
    <property type="entry name" value="2,3,4,5-TETRAHYDROPYRIDINE-2,6-DICARBOXYLATE N-ACETYLTRANSFERASE"/>
    <property type="match status" value="1"/>
</dbReference>
<dbReference type="PANTHER" id="PTHR43300">
    <property type="entry name" value="ACETYLTRANSFERASE"/>
    <property type="match status" value="1"/>
</dbReference>
<dbReference type="Pfam" id="PF08503">
    <property type="entry name" value="DapH_N"/>
    <property type="match status" value="1"/>
</dbReference>
<dbReference type="Pfam" id="PF00132">
    <property type="entry name" value="Hexapep"/>
    <property type="match status" value="1"/>
</dbReference>
<dbReference type="Pfam" id="PF14602">
    <property type="entry name" value="Hexapep_2"/>
    <property type="match status" value="1"/>
</dbReference>
<dbReference type="SUPFAM" id="SSF51161">
    <property type="entry name" value="Trimeric LpxA-like enzymes"/>
    <property type="match status" value="1"/>
</dbReference>
<dbReference type="PROSITE" id="PS00101">
    <property type="entry name" value="HEXAPEP_TRANSFERASES"/>
    <property type="match status" value="1"/>
</dbReference>